<feature type="chain" id="PRO_0000307880" description="Solute carrier family 35 member F3">
    <location>
        <begin position="1"/>
        <end position="421"/>
    </location>
</feature>
<feature type="transmembrane region" description="Helical" evidence="2">
    <location>
        <begin position="66"/>
        <end position="86"/>
    </location>
</feature>
<feature type="transmembrane region" description="Helical" evidence="2">
    <location>
        <begin position="98"/>
        <end position="118"/>
    </location>
</feature>
<feature type="transmembrane region" description="Helical" evidence="2">
    <location>
        <begin position="149"/>
        <end position="169"/>
    </location>
</feature>
<feature type="transmembrane region" description="Helical" evidence="2">
    <location>
        <begin position="179"/>
        <end position="199"/>
    </location>
</feature>
<feature type="transmembrane region" description="Helical" evidence="2">
    <location>
        <begin position="208"/>
        <end position="228"/>
    </location>
</feature>
<feature type="transmembrane region" description="Helical" evidence="2">
    <location>
        <begin position="232"/>
        <end position="252"/>
    </location>
</feature>
<feature type="transmembrane region" description="Helical" evidence="2">
    <location>
        <begin position="266"/>
        <end position="286"/>
    </location>
</feature>
<feature type="transmembrane region" description="Helical" evidence="2">
    <location>
        <begin position="305"/>
        <end position="325"/>
    </location>
</feature>
<feature type="transmembrane region" description="Helical" evidence="2">
    <location>
        <begin position="326"/>
        <end position="346"/>
    </location>
</feature>
<feature type="transmembrane region" description="Helical" evidence="2">
    <location>
        <begin position="352"/>
        <end position="372"/>
    </location>
</feature>
<feature type="region of interest" description="Disordered" evidence="3">
    <location>
        <begin position="25"/>
        <end position="53"/>
    </location>
</feature>
<feature type="region of interest" description="Disordered" evidence="3">
    <location>
        <begin position="394"/>
        <end position="421"/>
    </location>
</feature>
<feature type="compositionally biased region" description="Low complexity" evidence="3">
    <location>
        <begin position="37"/>
        <end position="49"/>
    </location>
</feature>
<feature type="compositionally biased region" description="Basic residues" evidence="3">
    <location>
        <begin position="411"/>
        <end position="421"/>
    </location>
</feature>
<feature type="sequence conflict" description="In Ref. 1; BAC32690." evidence="4" ref="1">
    <original>LARLTFKTFDAPFTLTWFATNWNF</original>
    <variation>ARQADFQDLRRTVHPDVVCHQLEL</variation>
    <location>
        <begin position="86"/>
        <end position="109"/>
    </location>
</feature>
<feature type="sequence conflict" description="In Ref. 1; BAC32690." evidence="4" ref="1">
    <original>K</original>
    <variation>R</variation>
    <location>
        <position position="153"/>
    </location>
</feature>
<reference key="1">
    <citation type="journal article" date="2005" name="Science">
        <title>The transcriptional landscape of the mammalian genome.</title>
        <authorList>
            <person name="Carninci P."/>
            <person name="Kasukawa T."/>
            <person name="Katayama S."/>
            <person name="Gough J."/>
            <person name="Frith M.C."/>
            <person name="Maeda N."/>
            <person name="Oyama R."/>
            <person name="Ravasi T."/>
            <person name="Lenhard B."/>
            <person name="Wells C."/>
            <person name="Kodzius R."/>
            <person name="Shimokawa K."/>
            <person name="Bajic V.B."/>
            <person name="Brenner S.E."/>
            <person name="Batalov S."/>
            <person name="Forrest A.R."/>
            <person name="Zavolan M."/>
            <person name="Davis M.J."/>
            <person name="Wilming L.G."/>
            <person name="Aidinis V."/>
            <person name="Allen J.E."/>
            <person name="Ambesi-Impiombato A."/>
            <person name="Apweiler R."/>
            <person name="Aturaliya R.N."/>
            <person name="Bailey T.L."/>
            <person name="Bansal M."/>
            <person name="Baxter L."/>
            <person name="Beisel K.W."/>
            <person name="Bersano T."/>
            <person name="Bono H."/>
            <person name="Chalk A.M."/>
            <person name="Chiu K.P."/>
            <person name="Choudhary V."/>
            <person name="Christoffels A."/>
            <person name="Clutterbuck D.R."/>
            <person name="Crowe M.L."/>
            <person name="Dalla E."/>
            <person name="Dalrymple B.P."/>
            <person name="de Bono B."/>
            <person name="Della Gatta G."/>
            <person name="di Bernardo D."/>
            <person name="Down T."/>
            <person name="Engstrom P."/>
            <person name="Fagiolini M."/>
            <person name="Faulkner G."/>
            <person name="Fletcher C.F."/>
            <person name="Fukushima T."/>
            <person name="Furuno M."/>
            <person name="Futaki S."/>
            <person name="Gariboldi M."/>
            <person name="Georgii-Hemming P."/>
            <person name="Gingeras T.R."/>
            <person name="Gojobori T."/>
            <person name="Green R.E."/>
            <person name="Gustincich S."/>
            <person name="Harbers M."/>
            <person name="Hayashi Y."/>
            <person name="Hensch T.K."/>
            <person name="Hirokawa N."/>
            <person name="Hill D."/>
            <person name="Huminiecki L."/>
            <person name="Iacono M."/>
            <person name="Ikeo K."/>
            <person name="Iwama A."/>
            <person name="Ishikawa T."/>
            <person name="Jakt M."/>
            <person name="Kanapin A."/>
            <person name="Katoh M."/>
            <person name="Kawasawa Y."/>
            <person name="Kelso J."/>
            <person name="Kitamura H."/>
            <person name="Kitano H."/>
            <person name="Kollias G."/>
            <person name="Krishnan S.P."/>
            <person name="Kruger A."/>
            <person name="Kummerfeld S.K."/>
            <person name="Kurochkin I.V."/>
            <person name="Lareau L.F."/>
            <person name="Lazarevic D."/>
            <person name="Lipovich L."/>
            <person name="Liu J."/>
            <person name="Liuni S."/>
            <person name="McWilliam S."/>
            <person name="Madan Babu M."/>
            <person name="Madera M."/>
            <person name="Marchionni L."/>
            <person name="Matsuda H."/>
            <person name="Matsuzawa S."/>
            <person name="Miki H."/>
            <person name="Mignone F."/>
            <person name="Miyake S."/>
            <person name="Morris K."/>
            <person name="Mottagui-Tabar S."/>
            <person name="Mulder N."/>
            <person name="Nakano N."/>
            <person name="Nakauchi H."/>
            <person name="Ng P."/>
            <person name="Nilsson R."/>
            <person name="Nishiguchi S."/>
            <person name="Nishikawa S."/>
            <person name="Nori F."/>
            <person name="Ohara O."/>
            <person name="Okazaki Y."/>
            <person name="Orlando V."/>
            <person name="Pang K.C."/>
            <person name="Pavan W.J."/>
            <person name="Pavesi G."/>
            <person name="Pesole G."/>
            <person name="Petrovsky N."/>
            <person name="Piazza S."/>
            <person name="Reed J."/>
            <person name="Reid J.F."/>
            <person name="Ring B.Z."/>
            <person name="Ringwald M."/>
            <person name="Rost B."/>
            <person name="Ruan Y."/>
            <person name="Salzberg S.L."/>
            <person name="Sandelin A."/>
            <person name="Schneider C."/>
            <person name="Schoenbach C."/>
            <person name="Sekiguchi K."/>
            <person name="Semple C.A."/>
            <person name="Seno S."/>
            <person name="Sessa L."/>
            <person name="Sheng Y."/>
            <person name="Shibata Y."/>
            <person name="Shimada H."/>
            <person name="Shimada K."/>
            <person name="Silva D."/>
            <person name="Sinclair B."/>
            <person name="Sperling S."/>
            <person name="Stupka E."/>
            <person name="Sugiura K."/>
            <person name="Sultana R."/>
            <person name="Takenaka Y."/>
            <person name="Taki K."/>
            <person name="Tammoja K."/>
            <person name="Tan S.L."/>
            <person name="Tang S."/>
            <person name="Taylor M.S."/>
            <person name="Tegner J."/>
            <person name="Teichmann S.A."/>
            <person name="Ueda H.R."/>
            <person name="van Nimwegen E."/>
            <person name="Verardo R."/>
            <person name="Wei C.L."/>
            <person name="Yagi K."/>
            <person name="Yamanishi H."/>
            <person name="Zabarovsky E."/>
            <person name="Zhu S."/>
            <person name="Zimmer A."/>
            <person name="Hide W."/>
            <person name="Bult C."/>
            <person name="Grimmond S.M."/>
            <person name="Teasdale R.D."/>
            <person name="Liu E.T."/>
            <person name="Brusic V."/>
            <person name="Quackenbush J."/>
            <person name="Wahlestedt C."/>
            <person name="Mattick J.S."/>
            <person name="Hume D.A."/>
            <person name="Kai C."/>
            <person name="Sasaki D."/>
            <person name="Tomaru Y."/>
            <person name="Fukuda S."/>
            <person name="Kanamori-Katayama M."/>
            <person name="Suzuki M."/>
            <person name="Aoki J."/>
            <person name="Arakawa T."/>
            <person name="Iida J."/>
            <person name="Imamura K."/>
            <person name="Itoh M."/>
            <person name="Kato T."/>
            <person name="Kawaji H."/>
            <person name="Kawagashira N."/>
            <person name="Kawashima T."/>
            <person name="Kojima M."/>
            <person name="Kondo S."/>
            <person name="Konno H."/>
            <person name="Nakano K."/>
            <person name="Ninomiya N."/>
            <person name="Nishio T."/>
            <person name="Okada M."/>
            <person name="Plessy C."/>
            <person name="Shibata K."/>
            <person name="Shiraki T."/>
            <person name="Suzuki S."/>
            <person name="Tagami M."/>
            <person name="Waki K."/>
            <person name="Watahiki A."/>
            <person name="Okamura-Oho Y."/>
            <person name="Suzuki H."/>
            <person name="Kawai J."/>
            <person name="Hayashizaki Y."/>
        </authorList>
    </citation>
    <scope>NUCLEOTIDE SEQUENCE [LARGE SCALE MRNA]</scope>
    <source>
        <strain>C57BL/6J</strain>
        <tissue>Corpora quadrigemina</tissue>
    </source>
</reference>
<reference key="2">
    <citation type="journal article" date="2004" name="Genome Res.">
        <title>The status, quality, and expansion of the NIH full-length cDNA project: the Mammalian Gene Collection (MGC).</title>
        <authorList>
            <consortium name="The MGC Project Team"/>
        </authorList>
    </citation>
    <scope>NUCLEOTIDE SEQUENCE [LARGE SCALE MRNA]</scope>
</reference>
<evidence type="ECO:0000250" key="1">
    <source>
        <dbReference type="UniProtKB" id="Q8IY50"/>
    </source>
</evidence>
<evidence type="ECO:0000255" key="2"/>
<evidence type="ECO:0000256" key="3">
    <source>
        <dbReference type="SAM" id="MobiDB-lite"/>
    </source>
</evidence>
<evidence type="ECO:0000305" key="4"/>
<comment type="function">
    <text evidence="1">Mediates thiamine transport.</text>
</comment>
<comment type="catalytic activity">
    <reaction evidence="1">
        <text>thiamine(in) = thiamine(out)</text>
        <dbReference type="Rhea" id="RHEA:34919"/>
        <dbReference type="ChEBI" id="CHEBI:18385"/>
    </reaction>
</comment>
<comment type="subcellular location">
    <subcellularLocation>
        <location evidence="4">Membrane</location>
        <topology evidence="4">Multi-pass membrane protein</topology>
    </subcellularLocation>
</comment>
<comment type="similarity">
    <text evidence="4">Belongs to the SLC35F solute transporter family.</text>
</comment>
<keyword id="KW-0472">Membrane</keyword>
<keyword id="KW-1185">Reference proteome</keyword>
<keyword id="KW-0812">Transmembrane</keyword>
<keyword id="KW-1133">Transmembrane helix</keyword>
<keyword id="KW-0813">Transport</keyword>
<sequence length="421" mass="46924">MKKHSARVAPLSACNSPVLTLTKVEGEERPREPPGPAEAQAPAGTEAGGRTSRHNWTCSQERLKKVFWGVAVVFCVCASWAGSTQLARLTFKTFDAPFTLTWFATNWNFLFFPLYYAGHVCKSTEKQSMKQRYRECCRFFGDNGLTLKVFFTKAAPFGVLWTLTNYLYLHAIKKINATDVSVLFCCNKSFVFLLSWIVLRDRFMGVRIVAAILAIAGIVMMTYADGFHSHSVIGIALVVGSASMSALYKVLFKLLLGSAKFGEAALFLSILGVFNILFITCIPVILYFTRVEYWNSFDDIPWGNLCGFSILLLTFNIVLNFGIAVTYPTLMSLGIVLSVPVNAVVDHYTSQIVFNGVRVIAIIIIGLGFLLLLLPEEWDVWLIKLLTRLKVRKKEETAESSGDLGTGPQSRSRRARPSFAR</sequence>
<accession>Q1LZI2</accession>
<accession>Q8BL51</accession>
<organism>
    <name type="scientific">Mus musculus</name>
    <name type="common">Mouse</name>
    <dbReference type="NCBI Taxonomy" id="10090"/>
    <lineage>
        <taxon>Eukaryota</taxon>
        <taxon>Metazoa</taxon>
        <taxon>Chordata</taxon>
        <taxon>Craniata</taxon>
        <taxon>Vertebrata</taxon>
        <taxon>Euteleostomi</taxon>
        <taxon>Mammalia</taxon>
        <taxon>Eutheria</taxon>
        <taxon>Euarchontoglires</taxon>
        <taxon>Glires</taxon>
        <taxon>Rodentia</taxon>
        <taxon>Myomorpha</taxon>
        <taxon>Muroidea</taxon>
        <taxon>Muridae</taxon>
        <taxon>Murinae</taxon>
        <taxon>Mus</taxon>
        <taxon>Mus</taxon>
    </lineage>
</organism>
<dbReference type="EMBL" id="AK046359">
    <property type="protein sequence ID" value="BAC32690.1"/>
    <property type="molecule type" value="mRNA"/>
</dbReference>
<dbReference type="EMBL" id="BC115859">
    <property type="protein sequence ID" value="AAI15860.1"/>
    <property type="molecule type" value="mRNA"/>
</dbReference>
<dbReference type="EMBL" id="BC115965">
    <property type="protein sequence ID" value="AAI15966.1"/>
    <property type="molecule type" value="mRNA"/>
</dbReference>
<dbReference type="CCDS" id="CCDS40520.1"/>
<dbReference type="RefSeq" id="NP_780643.2">
    <property type="nucleotide sequence ID" value="NM_175434.3"/>
</dbReference>
<dbReference type="SMR" id="Q1LZI2"/>
<dbReference type="FunCoup" id="Q1LZI2">
    <property type="interactions" value="57"/>
</dbReference>
<dbReference type="STRING" id="10090.ENSMUSP00000104390"/>
<dbReference type="iPTMnet" id="Q1LZI2"/>
<dbReference type="PhosphoSitePlus" id="Q1LZI2"/>
<dbReference type="SwissPalm" id="Q1LZI2"/>
<dbReference type="PaxDb" id="10090-ENSMUSP00000104390"/>
<dbReference type="ProteomicsDB" id="256680"/>
<dbReference type="Antibodypedia" id="34691">
    <property type="antibodies" value="43 antibodies from 16 providers"/>
</dbReference>
<dbReference type="DNASU" id="210027"/>
<dbReference type="Ensembl" id="ENSMUST00000108759.3">
    <property type="protein sequence ID" value="ENSMUSP00000104390.3"/>
    <property type="gene ID" value="ENSMUSG00000057060.9"/>
</dbReference>
<dbReference type="GeneID" id="210027"/>
<dbReference type="KEGG" id="mmu:210027"/>
<dbReference type="UCSC" id="uc009nys.1">
    <property type="organism name" value="mouse"/>
</dbReference>
<dbReference type="AGR" id="MGI:2444426"/>
<dbReference type="CTD" id="148641"/>
<dbReference type="MGI" id="MGI:2444426">
    <property type="gene designation" value="Slc35f3"/>
</dbReference>
<dbReference type="VEuPathDB" id="HostDB:ENSMUSG00000057060"/>
<dbReference type="eggNOG" id="KOG4314">
    <property type="taxonomic scope" value="Eukaryota"/>
</dbReference>
<dbReference type="GeneTree" id="ENSGT00390000008727"/>
<dbReference type="HOGENOM" id="CLU_022280_0_1_1"/>
<dbReference type="InParanoid" id="Q1LZI2"/>
<dbReference type="OMA" id="MCKSPER"/>
<dbReference type="OrthoDB" id="10062838at2759"/>
<dbReference type="PhylomeDB" id="Q1LZI2"/>
<dbReference type="TreeFam" id="TF313798"/>
<dbReference type="BioGRID-ORCS" id="210027">
    <property type="hits" value="1 hit in 78 CRISPR screens"/>
</dbReference>
<dbReference type="ChiTaRS" id="Slc35f3">
    <property type="organism name" value="mouse"/>
</dbReference>
<dbReference type="PRO" id="PR:Q1LZI2"/>
<dbReference type="Proteomes" id="UP000000589">
    <property type="component" value="Chromosome 8"/>
</dbReference>
<dbReference type="RNAct" id="Q1LZI2">
    <property type="molecule type" value="protein"/>
</dbReference>
<dbReference type="Bgee" id="ENSMUSG00000057060">
    <property type="expression patterns" value="Expressed in epithelium of lens and 99 other cell types or tissues"/>
</dbReference>
<dbReference type="ExpressionAtlas" id="Q1LZI2">
    <property type="expression patterns" value="baseline and differential"/>
</dbReference>
<dbReference type="GO" id="GO:0016020">
    <property type="term" value="C:membrane"/>
    <property type="evidence" value="ECO:0007669"/>
    <property type="project" value="UniProtKB-SubCell"/>
</dbReference>
<dbReference type="GO" id="GO:0015888">
    <property type="term" value="P:thiamine transport"/>
    <property type="evidence" value="ECO:0007669"/>
    <property type="project" value="Ensembl"/>
</dbReference>
<dbReference type="InterPro" id="IPR000620">
    <property type="entry name" value="EamA_dom"/>
</dbReference>
<dbReference type="InterPro" id="IPR026505">
    <property type="entry name" value="Solute_c_fam_35_mem_F3/F4"/>
</dbReference>
<dbReference type="PANTHER" id="PTHR19346:SF3">
    <property type="entry name" value="SOLUTE CARRIER FAMILY 35 MEMBER F3"/>
    <property type="match status" value="1"/>
</dbReference>
<dbReference type="PANTHER" id="PTHR19346">
    <property type="entry name" value="SUGAR PHOSPHATE TRANSPORTER DOMAIN-CONTAINING PROTEIN"/>
    <property type="match status" value="1"/>
</dbReference>
<dbReference type="Pfam" id="PF00892">
    <property type="entry name" value="EamA"/>
    <property type="match status" value="1"/>
</dbReference>
<dbReference type="SUPFAM" id="SSF103481">
    <property type="entry name" value="Multidrug resistance efflux transporter EmrE"/>
    <property type="match status" value="1"/>
</dbReference>
<gene>
    <name type="primary">Slc35f3</name>
</gene>
<name>S35F3_MOUSE</name>
<protein>
    <recommendedName>
        <fullName>Solute carrier family 35 member F3</fullName>
    </recommendedName>
    <alternativeName>
        <fullName evidence="1">Thiamine transporter SLC35F3</fullName>
    </alternativeName>
</protein>
<proteinExistence type="evidence at transcript level"/>